<keyword id="KW-1185">Reference proteome</keyword>
<keyword id="KW-0687">Ribonucleoprotein</keyword>
<keyword id="KW-0689">Ribosomal protein</keyword>
<keyword id="KW-0694">RNA-binding</keyword>
<keyword id="KW-0699">rRNA-binding</keyword>
<reference key="1">
    <citation type="journal article" date="2011" name="PLoS ONE">
        <title>The genome of Akkermansia muciniphila, a dedicated intestinal mucin degrader, and its use in exploring intestinal metagenomes.</title>
        <authorList>
            <person name="van Passel M.W."/>
            <person name="Kant R."/>
            <person name="Zoetendal E.G."/>
            <person name="Plugge C.M."/>
            <person name="Derrien M."/>
            <person name="Malfatti S.A."/>
            <person name="Chain P.S."/>
            <person name="Woyke T."/>
            <person name="Palva A."/>
            <person name="de Vos W.M."/>
            <person name="Smidt H."/>
        </authorList>
    </citation>
    <scope>NUCLEOTIDE SEQUENCE [LARGE SCALE GENOMIC DNA]</scope>
    <source>
        <strain>ATCC BAA-835 / DSM 22959 / JCM 33894 / BCRC 81048 / CCUG 64013 / CIP 107961 / Muc</strain>
    </source>
</reference>
<organism>
    <name type="scientific">Akkermansia muciniphila (strain ATCC BAA-835 / DSM 22959 / JCM 33894 / BCRC 81048 / CCUG 64013 / CIP 107961 / Muc)</name>
    <dbReference type="NCBI Taxonomy" id="349741"/>
    <lineage>
        <taxon>Bacteria</taxon>
        <taxon>Pseudomonadati</taxon>
        <taxon>Verrucomicrobiota</taxon>
        <taxon>Verrucomicrobiia</taxon>
        <taxon>Verrucomicrobiales</taxon>
        <taxon>Akkermansiaceae</taxon>
        <taxon>Akkermansia</taxon>
    </lineage>
</organism>
<protein>
    <recommendedName>
        <fullName evidence="1">Small ribosomal subunit protein bS6</fullName>
    </recommendedName>
    <alternativeName>
        <fullName evidence="2">30S ribosomal protein S6</fullName>
    </alternativeName>
</protein>
<proteinExistence type="inferred from homology"/>
<evidence type="ECO:0000255" key="1">
    <source>
        <dbReference type="HAMAP-Rule" id="MF_00360"/>
    </source>
</evidence>
<evidence type="ECO:0000305" key="2"/>
<dbReference type="EMBL" id="CP001071">
    <property type="protein sequence ID" value="ACD05298.1"/>
    <property type="molecule type" value="Genomic_DNA"/>
</dbReference>
<dbReference type="RefSeq" id="WP_012420513.1">
    <property type="nucleotide sequence ID" value="NZ_CP071807.1"/>
</dbReference>
<dbReference type="SMR" id="B2UL25"/>
<dbReference type="STRING" id="349741.Amuc_1476"/>
<dbReference type="PaxDb" id="349741-Amuc_1476"/>
<dbReference type="GeneID" id="60881002"/>
<dbReference type="KEGG" id="amu:Amuc_1476"/>
<dbReference type="eggNOG" id="COG0360">
    <property type="taxonomic scope" value="Bacteria"/>
</dbReference>
<dbReference type="HOGENOM" id="CLU_113441_5_2_0"/>
<dbReference type="OrthoDB" id="195283at2"/>
<dbReference type="BioCyc" id="AMUC349741:G1GBX-1578-MONOMER"/>
<dbReference type="Proteomes" id="UP000001031">
    <property type="component" value="Chromosome"/>
</dbReference>
<dbReference type="GO" id="GO:1990904">
    <property type="term" value="C:ribonucleoprotein complex"/>
    <property type="evidence" value="ECO:0007669"/>
    <property type="project" value="UniProtKB-KW"/>
</dbReference>
<dbReference type="GO" id="GO:0005840">
    <property type="term" value="C:ribosome"/>
    <property type="evidence" value="ECO:0007669"/>
    <property type="project" value="UniProtKB-KW"/>
</dbReference>
<dbReference type="GO" id="GO:0019843">
    <property type="term" value="F:rRNA binding"/>
    <property type="evidence" value="ECO:0007669"/>
    <property type="project" value="UniProtKB-UniRule"/>
</dbReference>
<dbReference type="GO" id="GO:0003735">
    <property type="term" value="F:structural constituent of ribosome"/>
    <property type="evidence" value="ECO:0007669"/>
    <property type="project" value="InterPro"/>
</dbReference>
<dbReference type="GO" id="GO:0006412">
    <property type="term" value="P:translation"/>
    <property type="evidence" value="ECO:0007669"/>
    <property type="project" value="UniProtKB-UniRule"/>
</dbReference>
<dbReference type="CDD" id="cd00473">
    <property type="entry name" value="bS6"/>
    <property type="match status" value="1"/>
</dbReference>
<dbReference type="Gene3D" id="3.30.70.60">
    <property type="match status" value="1"/>
</dbReference>
<dbReference type="HAMAP" id="MF_00360">
    <property type="entry name" value="Ribosomal_bS6"/>
    <property type="match status" value="1"/>
</dbReference>
<dbReference type="InterPro" id="IPR000529">
    <property type="entry name" value="Ribosomal_bS6"/>
</dbReference>
<dbReference type="InterPro" id="IPR035980">
    <property type="entry name" value="Ribosomal_bS6_sf"/>
</dbReference>
<dbReference type="InterPro" id="IPR020814">
    <property type="entry name" value="Ribosomal_S6_plastid/chlpt"/>
</dbReference>
<dbReference type="InterPro" id="IPR014717">
    <property type="entry name" value="Transl_elong_EF1B/ribsomal_bS6"/>
</dbReference>
<dbReference type="NCBIfam" id="TIGR00166">
    <property type="entry name" value="S6"/>
    <property type="match status" value="1"/>
</dbReference>
<dbReference type="Pfam" id="PF01250">
    <property type="entry name" value="Ribosomal_S6"/>
    <property type="match status" value="1"/>
</dbReference>
<dbReference type="SUPFAM" id="SSF54995">
    <property type="entry name" value="Ribosomal protein S6"/>
    <property type="match status" value="1"/>
</dbReference>
<name>RS6_AKKM8</name>
<gene>
    <name evidence="1" type="primary">rpsF</name>
    <name type="ordered locus">Amuc_1476</name>
</gene>
<sequence length="94" mass="10640">MRNYEALIVFNMKGTETPVEELISTVAAAMKEEGADITATENAGRREFAYESNHLSAGQYVTYTFSAEPSAIRPIRERLRLNPQIHLQYYKVLG</sequence>
<comment type="function">
    <text evidence="1">Binds together with bS18 to 16S ribosomal RNA.</text>
</comment>
<comment type="similarity">
    <text evidence="1">Belongs to the bacterial ribosomal protein bS6 family.</text>
</comment>
<feature type="chain" id="PRO_1000120700" description="Small ribosomal subunit protein bS6">
    <location>
        <begin position="1"/>
        <end position="94"/>
    </location>
</feature>
<accession>B2UL25</accession>